<accession>C0Q2P1</accession>
<protein>
    <recommendedName>
        <fullName evidence="1">tRNA uridine 5-carboxymethylaminomethyl modification enzyme MnmG</fullName>
    </recommendedName>
    <alternativeName>
        <fullName evidence="1">Glucose-inhibited division protein A</fullName>
    </alternativeName>
</protein>
<feature type="chain" id="PRO_1000122754" description="tRNA uridine 5-carboxymethylaminomethyl modification enzyme MnmG">
    <location>
        <begin position="1"/>
        <end position="629"/>
    </location>
</feature>
<feature type="binding site" evidence="1">
    <location>
        <begin position="13"/>
        <end position="18"/>
    </location>
    <ligand>
        <name>FAD</name>
        <dbReference type="ChEBI" id="CHEBI:57692"/>
    </ligand>
</feature>
<feature type="binding site" evidence="1">
    <location>
        <position position="125"/>
    </location>
    <ligand>
        <name>FAD</name>
        <dbReference type="ChEBI" id="CHEBI:57692"/>
    </ligand>
</feature>
<feature type="binding site" evidence="1">
    <location>
        <position position="180"/>
    </location>
    <ligand>
        <name>FAD</name>
        <dbReference type="ChEBI" id="CHEBI:57692"/>
    </ligand>
</feature>
<feature type="binding site" evidence="1">
    <location>
        <begin position="273"/>
        <end position="287"/>
    </location>
    <ligand>
        <name>NAD(+)</name>
        <dbReference type="ChEBI" id="CHEBI:57540"/>
    </ligand>
</feature>
<feature type="binding site" evidence="1">
    <location>
        <position position="370"/>
    </location>
    <ligand>
        <name>FAD</name>
        <dbReference type="ChEBI" id="CHEBI:57692"/>
    </ligand>
</feature>
<name>MNMG_SALPC</name>
<keyword id="KW-0963">Cytoplasm</keyword>
<keyword id="KW-0274">FAD</keyword>
<keyword id="KW-0285">Flavoprotein</keyword>
<keyword id="KW-0520">NAD</keyword>
<keyword id="KW-0819">tRNA processing</keyword>
<gene>
    <name evidence="1" type="primary">mnmG</name>
    <name evidence="1" type="synonym">gidA</name>
    <name type="ordered locus">SPC_3959</name>
</gene>
<sequence>MFYQDPFDVIIIGGGHAGTEAAMTAARMGQQTLLLTHNIDTLGQMSCNPAIGGIGKGHLVKEVDALGGLMAKAIDQAGIQFRILNASKGPAVRATRAQADRVLYRQAVRTALENQPNLMIFQQAVEDLIVENDRVVGAVTQMGLKFRAKAVVLTVGTFLDGKIHIGLDNYSGGRAGDPPSIPLSRRLRELPLRVSRLKTGTPPRIDARTIDFSVLAQQHGDNPMPVFSFMGNASQHPQQVPCYITHTNEKTHDVIRNNLDRSPMYAGVIEGIGPRYCPSIEDKVMRFADRNQHQIFLEPEGLTSNEIYPNGISTSLPFDVQMQIVRSMQGMENAKIVRPGYAIEYDFFDPRDLKPTLESKFIHGLFFAGQINGTTGYEEAAAQGLLAGLNAARLSADKEGWAPARSQAYLGVLVDDLCTLGTKEPYRMFTSRAEYRLMLREDNADLRLTEMGRELGLVDDERWARFNEKLENIERERQRLKSTWVTPSAESADEVNAHLTTPLSREASGEDLLRRPEMTYAQLTSLAAFAPALEDEQAAEQVEIQVKYEGYIARQQDEIEKQLRNENTLLPATLDYRQVSGLSNEVIAKLNDHKPASIGQASRISGVTPAAISILLVWLKKQGMLRRSA</sequence>
<reference key="1">
    <citation type="journal article" date="2009" name="PLoS ONE">
        <title>Salmonella paratyphi C: genetic divergence from Salmonella choleraesuis and pathogenic convergence with Salmonella typhi.</title>
        <authorList>
            <person name="Liu W.-Q."/>
            <person name="Feng Y."/>
            <person name="Wang Y."/>
            <person name="Zou Q.-H."/>
            <person name="Chen F."/>
            <person name="Guo J.-T."/>
            <person name="Peng Y.-H."/>
            <person name="Jin Y."/>
            <person name="Li Y.-G."/>
            <person name="Hu S.-N."/>
            <person name="Johnston R.N."/>
            <person name="Liu G.-R."/>
            <person name="Liu S.-L."/>
        </authorList>
    </citation>
    <scope>NUCLEOTIDE SEQUENCE [LARGE SCALE GENOMIC DNA]</scope>
    <source>
        <strain>RKS4594</strain>
    </source>
</reference>
<dbReference type="EMBL" id="CP000857">
    <property type="protein sequence ID" value="ACN48027.1"/>
    <property type="molecule type" value="Genomic_DNA"/>
</dbReference>
<dbReference type="RefSeq" id="WP_000499883.1">
    <property type="nucleotide sequence ID" value="NC_012125.1"/>
</dbReference>
<dbReference type="SMR" id="C0Q2P1"/>
<dbReference type="KEGG" id="sei:SPC_3959"/>
<dbReference type="HOGENOM" id="CLU_007831_2_2_6"/>
<dbReference type="Proteomes" id="UP000001599">
    <property type="component" value="Chromosome"/>
</dbReference>
<dbReference type="GO" id="GO:0005829">
    <property type="term" value="C:cytosol"/>
    <property type="evidence" value="ECO:0007669"/>
    <property type="project" value="TreeGrafter"/>
</dbReference>
<dbReference type="GO" id="GO:0050660">
    <property type="term" value="F:flavin adenine dinucleotide binding"/>
    <property type="evidence" value="ECO:0007669"/>
    <property type="project" value="UniProtKB-UniRule"/>
</dbReference>
<dbReference type="GO" id="GO:0030488">
    <property type="term" value="P:tRNA methylation"/>
    <property type="evidence" value="ECO:0007669"/>
    <property type="project" value="TreeGrafter"/>
</dbReference>
<dbReference type="GO" id="GO:0002098">
    <property type="term" value="P:tRNA wobble uridine modification"/>
    <property type="evidence" value="ECO:0007669"/>
    <property type="project" value="InterPro"/>
</dbReference>
<dbReference type="FunFam" id="1.10.10.1800:FF:000001">
    <property type="entry name" value="tRNA uridine 5-carboxymethylaminomethyl modification enzyme MnmG"/>
    <property type="match status" value="1"/>
</dbReference>
<dbReference type="FunFam" id="1.10.150.570:FF:000001">
    <property type="entry name" value="tRNA uridine 5-carboxymethylaminomethyl modification enzyme MnmG"/>
    <property type="match status" value="1"/>
</dbReference>
<dbReference type="FunFam" id="3.50.50.60:FF:000002">
    <property type="entry name" value="tRNA uridine 5-carboxymethylaminomethyl modification enzyme MnmG"/>
    <property type="match status" value="1"/>
</dbReference>
<dbReference type="FunFam" id="3.50.50.60:FF:000010">
    <property type="entry name" value="tRNA uridine 5-carboxymethylaminomethyl modification enzyme MnmG"/>
    <property type="match status" value="1"/>
</dbReference>
<dbReference type="Gene3D" id="3.50.50.60">
    <property type="entry name" value="FAD/NAD(P)-binding domain"/>
    <property type="match status" value="2"/>
</dbReference>
<dbReference type="Gene3D" id="1.10.150.570">
    <property type="entry name" value="GidA associated domain, C-terminal subdomain"/>
    <property type="match status" value="1"/>
</dbReference>
<dbReference type="Gene3D" id="1.10.10.1800">
    <property type="entry name" value="tRNA uridine 5-carboxymethylaminomethyl modification enzyme MnmG/GidA"/>
    <property type="match status" value="1"/>
</dbReference>
<dbReference type="HAMAP" id="MF_00129">
    <property type="entry name" value="MnmG_GidA"/>
    <property type="match status" value="1"/>
</dbReference>
<dbReference type="InterPro" id="IPR036188">
    <property type="entry name" value="FAD/NAD-bd_sf"/>
</dbReference>
<dbReference type="InterPro" id="IPR049312">
    <property type="entry name" value="GIDA_C_N"/>
</dbReference>
<dbReference type="InterPro" id="IPR004416">
    <property type="entry name" value="MnmG"/>
</dbReference>
<dbReference type="InterPro" id="IPR002218">
    <property type="entry name" value="MnmG-rel"/>
</dbReference>
<dbReference type="InterPro" id="IPR020595">
    <property type="entry name" value="MnmG-rel_CS"/>
</dbReference>
<dbReference type="InterPro" id="IPR026904">
    <property type="entry name" value="MnmG_C"/>
</dbReference>
<dbReference type="InterPro" id="IPR047001">
    <property type="entry name" value="MnmG_C_subdom"/>
</dbReference>
<dbReference type="InterPro" id="IPR044920">
    <property type="entry name" value="MnmG_C_subdom_sf"/>
</dbReference>
<dbReference type="InterPro" id="IPR040131">
    <property type="entry name" value="MnmG_N"/>
</dbReference>
<dbReference type="NCBIfam" id="TIGR00136">
    <property type="entry name" value="mnmG_gidA"/>
    <property type="match status" value="1"/>
</dbReference>
<dbReference type="PANTHER" id="PTHR11806">
    <property type="entry name" value="GLUCOSE INHIBITED DIVISION PROTEIN A"/>
    <property type="match status" value="1"/>
</dbReference>
<dbReference type="PANTHER" id="PTHR11806:SF0">
    <property type="entry name" value="PROTEIN MTO1 HOMOLOG, MITOCHONDRIAL"/>
    <property type="match status" value="1"/>
</dbReference>
<dbReference type="Pfam" id="PF01134">
    <property type="entry name" value="GIDA"/>
    <property type="match status" value="1"/>
</dbReference>
<dbReference type="Pfam" id="PF21680">
    <property type="entry name" value="GIDA_C_1st"/>
    <property type="match status" value="1"/>
</dbReference>
<dbReference type="Pfam" id="PF13932">
    <property type="entry name" value="SAM_GIDA_C"/>
    <property type="match status" value="1"/>
</dbReference>
<dbReference type="SMART" id="SM01228">
    <property type="entry name" value="GIDA_assoc_3"/>
    <property type="match status" value="1"/>
</dbReference>
<dbReference type="SUPFAM" id="SSF51905">
    <property type="entry name" value="FAD/NAD(P)-binding domain"/>
    <property type="match status" value="1"/>
</dbReference>
<dbReference type="PROSITE" id="PS01280">
    <property type="entry name" value="GIDA_1"/>
    <property type="match status" value="1"/>
</dbReference>
<dbReference type="PROSITE" id="PS01281">
    <property type="entry name" value="GIDA_2"/>
    <property type="match status" value="1"/>
</dbReference>
<evidence type="ECO:0000255" key="1">
    <source>
        <dbReference type="HAMAP-Rule" id="MF_00129"/>
    </source>
</evidence>
<organism>
    <name type="scientific">Salmonella paratyphi C (strain RKS4594)</name>
    <dbReference type="NCBI Taxonomy" id="476213"/>
    <lineage>
        <taxon>Bacteria</taxon>
        <taxon>Pseudomonadati</taxon>
        <taxon>Pseudomonadota</taxon>
        <taxon>Gammaproteobacteria</taxon>
        <taxon>Enterobacterales</taxon>
        <taxon>Enterobacteriaceae</taxon>
        <taxon>Salmonella</taxon>
    </lineage>
</organism>
<comment type="function">
    <text evidence="1">NAD-binding protein involved in the addition of a carboxymethylaminomethyl (cmnm) group at the wobble position (U34) of certain tRNAs, forming tRNA-cmnm(5)s(2)U34.</text>
</comment>
<comment type="cofactor">
    <cofactor evidence="1">
        <name>FAD</name>
        <dbReference type="ChEBI" id="CHEBI:57692"/>
    </cofactor>
</comment>
<comment type="subunit">
    <text evidence="1">Homodimer. Heterotetramer of two MnmE and two MnmG subunits.</text>
</comment>
<comment type="subcellular location">
    <subcellularLocation>
        <location evidence="1">Cytoplasm</location>
    </subcellularLocation>
</comment>
<comment type="similarity">
    <text evidence="1">Belongs to the MnmG family.</text>
</comment>
<proteinExistence type="inferred from homology"/>